<feature type="chain" id="PRO_0000324507" description="Pre-mRNA-splicing factor SPP381">
    <location>
        <begin position="1"/>
        <end position="261"/>
    </location>
</feature>
<feature type="region of interest" description="Disordered" evidence="2">
    <location>
        <begin position="1"/>
        <end position="88"/>
    </location>
</feature>
<feature type="region of interest" description="Disordered" evidence="2">
    <location>
        <begin position="205"/>
        <end position="229"/>
    </location>
</feature>
<feature type="compositionally biased region" description="Low complexity" evidence="2">
    <location>
        <begin position="13"/>
        <end position="32"/>
    </location>
</feature>
<feature type="compositionally biased region" description="Basic and acidic residues" evidence="2">
    <location>
        <begin position="37"/>
        <end position="55"/>
    </location>
</feature>
<feature type="compositionally biased region" description="Acidic residues" evidence="2">
    <location>
        <begin position="70"/>
        <end position="84"/>
    </location>
</feature>
<accession>A7TEH5</accession>
<evidence type="ECO:0000250" key="1"/>
<evidence type="ECO:0000256" key="2">
    <source>
        <dbReference type="SAM" id="MobiDB-lite"/>
    </source>
</evidence>
<evidence type="ECO:0000305" key="3"/>
<comment type="function">
    <text evidence="1">Component of the spliceosome and rRNA processing machinery. In association with the spliceosomal U4/U6.U5 tri-snRNP particle, required for splicing of pre-mRNA (By similarity).</text>
</comment>
<comment type="subunit">
    <text evidence="1">Component of the 25S U4/U6.U5 tri-snRNP particle, a subcomplex of the spliceosome.</text>
</comment>
<comment type="subcellular location">
    <subcellularLocation>
        <location evidence="1">Nucleus</location>
    </subcellularLocation>
</comment>
<comment type="similarity">
    <text evidence="3">Belongs to the SPP381 family.</text>
</comment>
<proteinExistence type="inferred from homology"/>
<gene>
    <name type="primary">SPP381</name>
    <name type="ORF">Kpol_1036p24</name>
</gene>
<protein>
    <recommendedName>
        <fullName>Pre-mRNA-splicing factor SPP381</fullName>
    </recommendedName>
</protein>
<keyword id="KW-0507">mRNA processing</keyword>
<keyword id="KW-0508">mRNA splicing</keyword>
<keyword id="KW-0539">Nucleus</keyword>
<keyword id="KW-1185">Reference proteome</keyword>
<keyword id="KW-0687">Ribonucleoprotein</keyword>
<keyword id="KW-0694">RNA-binding</keyword>
<keyword id="KW-0747">Spliceosome</keyword>
<name>SP381_VANPO</name>
<organism>
    <name type="scientific">Vanderwaltozyma polyspora (strain ATCC 22028 / DSM 70294 / BCRC 21397 / CBS 2163 / NBRC 10782 / NRRL Y-8283 / UCD 57-17)</name>
    <name type="common">Kluyveromyces polysporus</name>
    <dbReference type="NCBI Taxonomy" id="436907"/>
    <lineage>
        <taxon>Eukaryota</taxon>
        <taxon>Fungi</taxon>
        <taxon>Dikarya</taxon>
        <taxon>Ascomycota</taxon>
        <taxon>Saccharomycotina</taxon>
        <taxon>Saccharomycetes</taxon>
        <taxon>Saccharomycetales</taxon>
        <taxon>Saccharomycetaceae</taxon>
        <taxon>Vanderwaltozyma</taxon>
    </lineage>
</organism>
<dbReference type="EMBL" id="DS480380">
    <property type="protein sequence ID" value="EDO19282.1"/>
    <property type="molecule type" value="Genomic_DNA"/>
</dbReference>
<dbReference type="RefSeq" id="XP_001647140.1">
    <property type="nucleotide sequence ID" value="XM_001647090.1"/>
</dbReference>
<dbReference type="SMR" id="A7TEH5"/>
<dbReference type="FunCoup" id="A7TEH5">
    <property type="interactions" value="163"/>
</dbReference>
<dbReference type="STRING" id="436907.A7TEH5"/>
<dbReference type="GeneID" id="5547618"/>
<dbReference type="KEGG" id="vpo:Kpol_1036p24"/>
<dbReference type="eggNOG" id="ENOG502S80M">
    <property type="taxonomic scope" value="Eukaryota"/>
</dbReference>
<dbReference type="HOGENOM" id="CLU_1066318_0_0_1"/>
<dbReference type="InParanoid" id="A7TEH5"/>
<dbReference type="OMA" id="WFERQNE"/>
<dbReference type="OrthoDB" id="4070429at2759"/>
<dbReference type="PhylomeDB" id="A7TEH5"/>
<dbReference type="Proteomes" id="UP000000267">
    <property type="component" value="Unassembled WGS sequence"/>
</dbReference>
<dbReference type="GO" id="GO:0005681">
    <property type="term" value="C:spliceosomal complex"/>
    <property type="evidence" value="ECO:0007669"/>
    <property type="project" value="UniProtKB-KW"/>
</dbReference>
<dbReference type="GO" id="GO:0003723">
    <property type="term" value="F:RNA binding"/>
    <property type="evidence" value="ECO:0007669"/>
    <property type="project" value="UniProtKB-KW"/>
</dbReference>
<dbReference type="GO" id="GO:0006397">
    <property type="term" value="P:mRNA processing"/>
    <property type="evidence" value="ECO:0007669"/>
    <property type="project" value="UniProtKB-KW"/>
</dbReference>
<dbReference type="GO" id="GO:0008380">
    <property type="term" value="P:RNA splicing"/>
    <property type="evidence" value="ECO:0007669"/>
    <property type="project" value="UniProtKB-KW"/>
</dbReference>
<reference key="1">
    <citation type="journal article" date="2007" name="Proc. Natl. Acad. Sci. U.S.A.">
        <title>Independent sorting-out of thousands of duplicated gene pairs in two yeast species descended from a whole-genome duplication.</title>
        <authorList>
            <person name="Scannell D.R."/>
            <person name="Frank A.C."/>
            <person name="Conant G.C."/>
            <person name="Byrne K.P."/>
            <person name="Woolfit M."/>
            <person name="Wolfe K.H."/>
        </authorList>
    </citation>
    <scope>NUCLEOTIDE SEQUENCE [LARGE SCALE GENOMIC DNA]</scope>
    <source>
        <strain>ATCC 22028 / DSM 70294 / BCRC 21397 / CBS 2163 / NBRC 10782 / NRRL Y-8283 / UCD 57-17</strain>
    </source>
</reference>
<sequence>MAIRHVKRRYSESSESSSSDESVVDSTEISVDINDDDAVKPDNEESQLEGERDMATNDGMENNGCSDLSSDSEDSSSEESDEEPVFQRPIFIKRNQLAEVTDSNNQGNVLRRIEHENKVVEQNEEAKKQIATNYTTDKEILMKAMSLNDNDLIDPEGERLRWLERQKIRKEKYRKKLIDKQLELEEYEANKLLNRDIDKLEENTTTTTGEKDIPIKKSNRINNNKGDNEFKPKRVVNVTFKSLDDNETSAVANEDSEYSIL</sequence>